<comment type="function">
    <text evidence="1">Tetrapolymerization of the monopyrrole PBG into the hydroxymethylbilane pre-uroporphyrinogen in several discrete steps.</text>
</comment>
<comment type="catalytic activity">
    <reaction evidence="1">
        <text>4 porphobilinogen + H2O = hydroxymethylbilane + 4 NH4(+)</text>
        <dbReference type="Rhea" id="RHEA:13185"/>
        <dbReference type="ChEBI" id="CHEBI:15377"/>
        <dbReference type="ChEBI" id="CHEBI:28938"/>
        <dbReference type="ChEBI" id="CHEBI:57845"/>
        <dbReference type="ChEBI" id="CHEBI:58126"/>
        <dbReference type="EC" id="2.5.1.61"/>
    </reaction>
</comment>
<comment type="cofactor">
    <cofactor evidence="1">
        <name>dipyrromethane</name>
        <dbReference type="ChEBI" id="CHEBI:60342"/>
    </cofactor>
    <text evidence="1">Binds 1 dipyrromethane group covalently.</text>
</comment>
<comment type="pathway">
    <text evidence="1">Porphyrin-containing compound metabolism; protoporphyrin-IX biosynthesis; coproporphyrinogen-III from 5-aminolevulinate: step 2/4.</text>
</comment>
<comment type="subunit">
    <text evidence="1">Monomer.</text>
</comment>
<comment type="miscellaneous">
    <text evidence="1">The porphobilinogen subunits are added to the dipyrromethane group.</text>
</comment>
<comment type="similarity">
    <text evidence="1">Belongs to the HMBS family.</text>
</comment>
<accession>Q3JUW3</accession>
<organism>
    <name type="scientific">Burkholderia pseudomallei (strain 1710b)</name>
    <dbReference type="NCBI Taxonomy" id="320372"/>
    <lineage>
        <taxon>Bacteria</taxon>
        <taxon>Pseudomonadati</taxon>
        <taxon>Pseudomonadota</taxon>
        <taxon>Betaproteobacteria</taxon>
        <taxon>Burkholderiales</taxon>
        <taxon>Burkholderiaceae</taxon>
        <taxon>Burkholderia</taxon>
        <taxon>pseudomallei group</taxon>
    </lineage>
</organism>
<name>HEM3_BURP1</name>
<evidence type="ECO:0000255" key="1">
    <source>
        <dbReference type="HAMAP-Rule" id="MF_00260"/>
    </source>
</evidence>
<keyword id="KW-0627">Porphyrin biosynthesis</keyword>
<keyword id="KW-0808">Transferase</keyword>
<dbReference type="EC" id="2.5.1.61" evidence="1"/>
<dbReference type="EMBL" id="CP000124">
    <property type="protein sequence ID" value="ABA47813.1"/>
    <property type="molecule type" value="Genomic_DNA"/>
</dbReference>
<dbReference type="RefSeq" id="WP_004193185.1">
    <property type="nucleotide sequence ID" value="NC_007434.1"/>
</dbReference>
<dbReference type="SMR" id="Q3JUW3"/>
<dbReference type="EnsemblBacteria" id="ABA47813">
    <property type="protein sequence ID" value="ABA47813"/>
    <property type="gene ID" value="BURPS1710b_1229"/>
</dbReference>
<dbReference type="GeneID" id="93059515"/>
<dbReference type="KEGG" id="bpm:BURPS1710b_1229"/>
<dbReference type="HOGENOM" id="CLU_019704_0_2_4"/>
<dbReference type="UniPathway" id="UPA00251">
    <property type="reaction ID" value="UER00319"/>
</dbReference>
<dbReference type="Proteomes" id="UP000002700">
    <property type="component" value="Chromosome I"/>
</dbReference>
<dbReference type="GO" id="GO:0005737">
    <property type="term" value="C:cytoplasm"/>
    <property type="evidence" value="ECO:0007669"/>
    <property type="project" value="TreeGrafter"/>
</dbReference>
<dbReference type="GO" id="GO:0004418">
    <property type="term" value="F:hydroxymethylbilane synthase activity"/>
    <property type="evidence" value="ECO:0007669"/>
    <property type="project" value="UniProtKB-UniRule"/>
</dbReference>
<dbReference type="GO" id="GO:0006782">
    <property type="term" value="P:protoporphyrinogen IX biosynthetic process"/>
    <property type="evidence" value="ECO:0007669"/>
    <property type="project" value="UniProtKB-UniRule"/>
</dbReference>
<dbReference type="CDD" id="cd13646">
    <property type="entry name" value="PBP2_EcHMBS_like"/>
    <property type="match status" value="1"/>
</dbReference>
<dbReference type="FunFam" id="3.40.190.10:FF:000004">
    <property type="entry name" value="Porphobilinogen deaminase"/>
    <property type="match status" value="1"/>
</dbReference>
<dbReference type="FunFam" id="3.40.190.10:FF:000005">
    <property type="entry name" value="Porphobilinogen deaminase"/>
    <property type="match status" value="1"/>
</dbReference>
<dbReference type="Gene3D" id="3.40.190.10">
    <property type="entry name" value="Periplasmic binding protein-like II"/>
    <property type="match status" value="2"/>
</dbReference>
<dbReference type="Gene3D" id="3.30.160.40">
    <property type="entry name" value="Porphobilinogen deaminase, C-terminal domain"/>
    <property type="match status" value="1"/>
</dbReference>
<dbReference type="HAMAP" id="MF_00260">
    <property type="entry name" value="Porphobil_deam"/>
    <property type="match status" value="1"/>
</dbReference>
<dbReference type="InterPro" id="IPR000860">
    <property type="entry name" value="HemC"/>
</dbReference>
<dbReference type="InterPro" id="IPR022419">
    <property type="entry name" value="Porphobilin_deaminase_cofac_BS"/>
</dbReference>
<dbReference type="InterPro" id="IPR022417">
    <property type="entry name" value="Porphobilin_deaminase_N"/>
</dbReference>
<dbReference type="InterPro" id="IPR022418">
    <property type="entry name" value="Porphobilinogen_deaminase_C"/>
</dbReference>
<dbReference type="InterPro" id="IPR036803">
    <property type="entry name" value="Porphobilinogen_deaminase_C_sf"/>
</dbReference>
<dbReference type="NCBIfam" id="TIGR00212">
    <property type="entry name" value="hemC"/>
    <property type="match status" value="1"/>
</dbReference>
<dbReference type="PANTHER" id="PTHR11557">
    <property type="entry name" value="PORPHOBILINOGEN DEAMINASE"/>
    <property type="match status" value="1"/>
</dbReference>
<dbReference type="PANTHER" id="PTHR11557:SF0">
    <property type="entry name" value="PORPHOBILINOGEN DEAMINASE"/>
    <property type="match status" value="1"/>
</dbReference>
<dbReference type="Pfam" id="PF01379">
    <property type="entry name" value="Porphobil_deam"/>
    <property type="match status" value="1"/>
</dbReference>
<dbReference type="Pfam" id="PF03900">
    <property type="entry name" value="Porphobil_deamC"/>
    <property type="match status" value="1"/>
</dbReference>
<dbReference type="PIRSF" id="PIRSF001438">
    <property type="entry name" value="4pyrrol_synth_OHMeBilane_synth"/>
    <property type="match status" value="1"/>
</dbReference>
<dbReference type="PRINTS" id="PR00151">
    <property type="entry name" value="PORPHBDMNASE"/>
</dbReference>
<dbReference type="SUPFAM" id="SSF53850">
    <property type="entry name" value="Periplasmic binding protein-like II"/>
    <property type="match status" value="1"/>
</dbReference>
<dbReference type="SUPFAM" id="SSF54782">
    <property type="entry name" value="Porphobilinogen deaminase (hydroxymethylbilane synthase), C-terminal domain"/>
    <property type="match status" value="1"/>
</dbReference>
<dbReference type="PROSITE" id="PS00533">
    <property type="entry name" value="PORPHOBILINOGEN_DEAM"/>
    <property type="match status" value="1"/>
</dbReference>
<reference key="1">
    <citation type="journal article" date="2010" name="Genome Biol. Evol.">
        <title>Continuing evolution of Burkholderia mallei through genome reduction and large-scale rearrangements.</title>
        <authorList>
            <person name="Losada L."/>
            <person name="Ronning C.M."/>
            <person name="DeShazer D."/>
            <person name="Woods D."/>
            <person name="Fedorova N."/>
            <person name="Kim H.S."/>
            <person name="Shabalina S.A."/>
            <person name="Pearson T.R."/>
            <person name="Brinkac L."/>
            <person name="Tan P."/>
            <person name="Nandi T."/>
            <person name="Crabtree J."/>
            <person name="Badger J."/>
            <person name="Beckstrom-Sternberg S."/>
            <person name="Saqib M."/>
            <person name="Schutzer S.E."/>
            <person name="Keim P."/>
            <person name="Nierman W.C."/>
        </authorList>
    </citation>
    <scope>NUCLEOTIDE SEQUENCE [LARGE SCALE GENOMIC DNA]</scope>
    <source>
        <strain>1710b</strain>
    </source>
</reference>
<proteinExistence type="inferred from homology"/>
<feature type="chain" id="PRO_0000304220" description="Porphobilinogen deaminase">
    <location>
        <begin position="1"/>
        <end position="329"/>
    </location>
</feature>
<feature type="modified residue" description="S-(dipyrrolylmethanemethyl)cysteine" evidence="1">
    <location>
        <position position="250"/>
    </location>
</feature>
<protein>
    <recommendedName>
        <fullName evidence="1">Porphobilinogen deaminase</fullName>
        <shortName evidence="1">PBG</shortName>
        <ecNumber evidence="1">2.5.1.61</ecNumber>
    </recommendedName>
    <alternativeName>
        <fullName evidence="1">Hydroxymethylbilane synthase</fullName>
        <shortName evidence="1">HMBS</shortName>
    </alternativeName>
    <alternativeName>
        <fullName evidence="1">Pre-uroporphyrinogen synthase</fullName>
    </alternativeName>
</protein>
<sequence length="329" mass="34409">MNSETLPAELPATLTIASRESRLAMWQAEHVRDALRKLYPACDVKILGMTTRGDQILDRTLSKVGGKGLFVKELESALADGRADLAVHSLKDVPMALPEGFALAAVMSREDPRDAFVSNDYASLDALPAGAVVGTSSLRREAMLRARHPRLDVRPLRGNLDTRLAKLDRGDYAAIILAAAGLKRLGLAARIRALLDVDDSLPAAGQGALGIEIAARRADVAAWLAPLHDHASALAVEAERAVSRALGGSCEVPLAAHAVWRGGELHLTGSVSTTDGARVLAAHAHARAATAADALALGRRVSDALERQGARAIVDALVAASAQAQKGGA</sequence>
<gene>
    <name evidence="1" type="primary">hemC</name>
    <name type="ordered locus">BURPS1710b_1229</name>
</gene>